<gene>
    <name type="primary">U36</name>
</gene>
<proteinExistence type="inferred from homology"/>
<organism>
    <name type="scientific">Human herpesvirus 7 (strain JI)</name>
    <name type="common">HHV-7</name>
    <name type="synonym">Human T lymphotropic virus</name>
    <dbReference type="NCBI Taxonomy" id="57278"/>
    <lineage>
        <taxon>Viruses</taxon>
        <taxon>Duplodnaviria</taxon>
        <taxon>Heunggongvirae</taxon>
        <taxon>Peploviricota</taxon>
        <taxon>Herviviricetes</taxon>
        <taxon>Herpesvirales</taxon>
        <taxon>Orthoherpesviridae</taxon>
        <taxon>Betaherpesvirinae</taxon>
        <taxon>Roseolovirus</taxon>
        <taxon>Roseolovirus humanbeta7</taxon>
        <taxon>Human betaherpesvirus 7</taxon>
    </lineage>
</organism>
<evidence type="ECO:0000250" key="1"/>
<evidence type="ECO:0000255" key="2">
    <source>
        <dbReference type="PROSITE-ProRule" id="PRU01332"/>
    </source>
</evidence>
<evidence type="ECO:0000305" key="3"/>
<reference key="1">
    <citation type="journal article" date="1996" name="J. Virol.">
        <title>Determination and analysis of the complete nucleotide sequence of human herpesvirus.</title>
        <authorList>
            <person name="Nicholas J."/>
        </authorList>
    </citation>
    <scope>NUCLEOTIDE SEQUENCE [LARGE SCALE GENOMIC DNA]</scope>
</reference>
<protein>
    <recommendedName>
        <fullName>Packaging protein UL32</fullName>
    </recommendedName>
</protein>
<comment type="function">
    <text evidence="1">Plays a role in efficient localization of neo-synthesized capsids to nuclear replication compartments, thereby controlling cleavage and packaging of virus genomic DNA.</text>
</comment>
<comment type="subcellular location">
    <subcellularLocation>
        <location>Host cytoplasm</location>
    </subcellularLocation>
    <subcellularLocation>
        <location>Host nucleus</location>
    </subcellularLocation>
    <text evidence="1">Mainly cytoplasmic in transfected cell culture.</text>
</comment>
<comment type="similarity">
    <text evidence="3">Belongs to the herpesviridae UL32 protein family.</text>
</comment>
<comment type="caution">
    <text evidence="3">Was originally thought to be an envelope glycoprotein.</text>
</comment>
<organismHost>
    <name type="scientific">Homo sapiens</name>
    <name type="common">Human</name>
    <dbReference type="NCBI Taxonomy" id="9606"/>
</organismHost>
<accession>P52464</accession>
<keyword id="KW-1035">Host cytoplasm</keyword>
<keyword id="KW-1048">Host nucleus</keyword>
<keyword id="KW-0479">Metal-binding</keyword>
<keyword id="KW-1185">Reference proteome</keyword>
<keyword id="KW-0862">Zinc</keyword>
<keyword id="KW-0863">Zinc-finger</keyword>
<dbReference type="EMBL" id="U43400">
    <property type="protein sequence ID" value="AAC54698.1"/>
    <property type="molecule type" value="Genomic_DNA"/>
</dbReference>
<dbReference type="PIR" id="T41938">
    <property type="entry name" value="T41938"/>
</dbReference>
<dbReference type="RefSeq" id="YP_073776.1">
    <property type="nucleotide sequence ID" value="NC_001716.2"/>
</dbReference>
<dbReference type="SMR" id="P52464"/>
<dbReference type="DNASU" id="3289494"/>
<dbReference type="GeneID" id="3289494"/>
<dbReference type="KEGG" id="vg:3289494"/>
<dbReference type="Proteomes" id="UP000009246">
    <property type="component" value="Segment"/>
</dbReference>
<dbReference type="GO" id="GO:0030430">
    <property type="term" value="C:host cell cytoplasm"/>
    <property type="evidence" value="ECO:0007669"/>
    <property type="project" value="UniProtKB-SubCell"/>
</dbReference>
<dbReference type="GO" id="GO:0042025">
    <property type="term" value="C:host cell nucleus"/>
    <property type="evidence" value="ECO:0007669"/>
    <property type="project" value="UniProtKB-SubCell"/>
</dbReference>
<dbReference type="GO" id="GO:0019031">
    <property type="term" value="C:viral envelope"/>
    <property type="evidence" value="ECO:0007669"/>
    <property type="project" value="InterPro"/>
</dbReference>
<dbReference type="GO" id="GO:0008270">
    <property type="term" value="F:zinc ion binding"/>
    <property type="evidence" value="ECO:0007669"/>
    <property type="project" value="UniProtKB-KW"/>
</dbReference>
<dbReference type="InterPro" id="IPR002597">
    <property type="entry name" value="Herpes_env"/>
</dbReference>
<dbReference type="Pfam" id="PF01673">
    <property type="entry name" value="Herpes_env"/>
    <property type="match status" value="2"/>
</dbReference>
<dbReference type="PROSITE" id="PS51988">
    <property type="entry name" value="HERPESVIRUS_UL32"/>
    <property type="match status" value="1"/>
</dbReference>
<name>UL32_HHV7J</name>
<sequence>MAYKGWNSDSFSMNSELFNEILLYAHLDSSGIDSDDLNTNPNTLENEINSVEKTLNIEELKKITTALNIDNRCNICSIINICLRHETDKMWIYDYALLCYKCNAAPRTPLAVVIIATEFMQLIQKHFLNINFDGLFLNNILSILDFHVHFFINRCFSNTNDDLLHNENITLYHMAILKSLLLEDESIPNIRIKKFKLKGKPTKKQHGNAILEKQTLPLNTHFTHLIFYMWAGTNIFDRISLTDLAIKKRQILKAIYSTKNELNCSAGPILLSQIPISITKNATSSVCLLCELMTSSQKNFDLLQFIYTSVINYCQNNLKMIDRIQFVLANLLDLARIYTNVKTTSDCSKIVLANEQEFSNSDFVIDCHSFLILKQVGPVGLYKHFFCDPLCIANIKTIKPHILFYTTESCILQDFKVAICYQNEYLNSVEKHVWLAIHFFKAFQVSKLNHKNKTLISDFLKDFTQLLADQNFEIVDPTFTIHYYV</sequence>
<feature type="chain" id="PRO_0000116018" description="Packaging protein UL32">
    <location>
        <begin position="1"/>
        <end position="485"/>
    </location>
</feature>
<feature type="region of interest" description="Zinc finger 1" evidence="2">
    <location>
        <begin position="73"/>
        <end position="155"/>
    </location>
</feature>
<feature type="region of interest" description="Zinc finger 2" evidence="2">
    <location>
        <begin position="287"/>
        <end position="391"/>
    </location>
</feature>
<feature type="binding site" evidence="2">
    <location>
        <position position="73"/>
    </location>
    <ligand>
        <name>Zn(2+)</name>
        <dbReference type="ChEBI" id="CHEBI:29105"/>
        <label>1</label>
    </ligand>
</feature>
<feature type="binding site" evidence="2">
    <location>
        <position position="76"/>
    </location>
    <ligand>
        <name>Zn(2+)</name>
        <dbReference type="ChEBI" id="CHEBI:29105"/>
        <label>1</label>
    </ligand>
</feature>
<feature type="binding site" evidence="2">
    <location>
        <position position="149"/>
    </location>
    <ligand>
        <name>Zn(2+)</name>
        <dbReference type="ChEBI" id="CHEBI:29105"/>
        <label>1</label>
    </ligand>
</feature>
<feature type="binding site" evidence="2">
    <location>
        <position position="155"/>
    </location>
    <ligand>
        <name>Zn(2+)</name>
        <dbReference type="ChEBI" id="CHEBI:29105"/>
        <label>1</label>
    </ligand>
</feature>
<feature type="binding site" evidence="2">
    <location>
        <position position="287"/>
    </location>
    <ligand>
        <name>Zn(2+)</name>
        <dbReference type="ChEBI" id="CHEBI:29105"/>
        <label>2</label>
    </ligand>
</feature>
<feature type="binding site" evidence="2">
    <location>
        <position position="290"/>
    </location>
    <ligand>
        <name>Zn(2+)</name>
        <dbReference type="ChEBI" id="CHEBI:29105"/>
        <label>2</label>
    </ligand>
</feature>
<feature type="binding site" evidence="2">
    <location>
        <position position="384"/>
    </location>
    <ligand>
        <name>Zn(2+)</name>
        <dbReference type="ChEBI" id="CHEBI:29105"/>
        <label>2</label>
    </ligand>
</feature>
<feature type="binding site" evidence="2">
    <location>
        <position position="391"/>
    </location>
    <ligand>
        <name>Zn(2+)</name>
        <dbReference type="ChEBI" id="CHEBI:29105"/>
        <label>2</label>
    </ligand>
</feature>